<reference key="1">
    <citation type="journal article" date="2015" name="Proc. Natl. Acad. Sci. U.S.A.">
        <title>Trichodesmium genome maintains abundant, widespread noncoding DNA in situ, despite oligotrophic lifestyle.</title>
        <authorList>
            <person name="Walworth N."/>
            <person name="Pfreundt U."/>
            <person name="Nelson W.C."/>
            <person name="Mincer T."/>
            <person name="Heidelberg J.F."/>
            <person name="Fu F."/>
            <person name="Waterbury J.B."/>
            <person name="Glavina del Rio T."/>
            <person name="Goodwin L."/>
            <person name="Kyrpides N.C."/>
            <person name="Land M.L."/>
            <person name="Woyke T."/>
            <person name="Hutchins D.A."/>
            <person name="Hess W.R."/>
            <person name="Webb E.A."/>
        </authorList>
    </citation>
    <scope>NUCLEOTIDE SEQUENCE [LARGE SCALE GENOMIC DNA]</scope>
    <source>
        <strain>IMS101</strain>
    </source>
</reference>
<dbReference type="EMBL" id="CP000393">
    <property type="protein sequence ID" value="ABG49748.1"/>
    <property type="molecule type" value="Genomic_DNA"/>
</dbReference>
<dbReference type="RefSeq" id="WP_011610144.1">
    <property type="nucleotide sequence ID" value="NC_008312.1"/>
</dbReference>
<dbReference type="SMR" id="Q119S6"/>
<dbReference type="STRING" id="203124.Tery_0265"/>
<dbReference type="KEGG" id="ter:Tery_0265"/>
<dbReference type="eggNOG" id="COG0080">
    <property type="taxonomic scope" value="Bacteria"/>
</dbReference>
<dbReference type="HOGENOM" id="CLU_074237_2_1_3"/>
<dbReference type="OrthoDB" id="9802408at2"/>
<dbReference type="GO" id="GO:0022625">
    <property type="term" value="C:cytosolic large ribosomal subunit"/>
    <property type="evidence" value="ECO:0007669"/>
    <property type="project" value="TreeGrafter"/>
</dbReference>
<dbReference type="GO" id="GO:0070180">
    <property type="term" value="F:large ribosomal subunit rRNA binding"/>
    <property type="evidence" value="ECO:0007669"/>
    <property type="project" value="UniProtKB-UniRule"/>
</dbReference>
<dbReference type="GO" id="GO:0003735">
    <property type="term" value="F:structural constituent of ribosome"/>
    <property type="evidence" value="ECO:0007669"/>
    <property type="project" value="InterPro"/>
</dbReference>
<dbReference type="GO" id="GO:0006412">
    <property type="term" value="P:translation"/>
    <property type="evidence" value="ECO:0007669"/>
    <property type="project" value="UniProtKB-UniRule"/>
</dbReference>
<dbReference type="CDD" id="cd00349">
    <property type="entry name" value="Ribosomal_L11"/>
    <property type="match status" value="1"/>
</dbReference>
<dbReference type="FunFam" id="1.10.10.250:FF:000001">
    <property type="entry name" value="50S ribosomal protein L11"/>
    <property type="match status" value="1"/>
</dbReference>
<dbReference type="FunFam" id="3.30.1550.10:FF:000001">
    <property type="entry name" value="50S ribosomal protein L11"/>
    <property type="match status" value="1"/>
</dbReference>
<dbReference type="Gene3D" id="1.10.10.250">
    <property type="entry name" value="Ribosomal protein L11, C-terminal domain"/>
    <property type="match status" value="1"/>
</dbReference>
<dbReference type="Gene3D" id="3.30.1550.10">
    <property type="entry name" value="Ribosomal protein L11/L12, N-terminal domain"/>
    <property type="match status" value="1"/>
</dbReference>
<dbReference type="HAMAP" id="MF_00736">
    <property type="entry name" value="Ribosomal_uL11"/>
    <property type="match status" value="1"/>
</dbReference>
<dbReference type="InterPro" id="IPR000911">
    <property type="entry name" value="Ribosomal_uL11"/>
</dbReference>
<dbReference type="InterPro" id="IPR006519">
    <property type="entry name" value="Ribosomal_uL11_bac-typ"/>
</dbReference>
<dbReference type="InterPro" id="IPR020783">
    <property type="entry name" value="Ribosomal_uL11_C"/>
</dbReference>
<dbReference type="InterPro" id="IPR036769">
    <property type="entry name" value="Ribosomal_uL11_C_sf"/>
</dbReference>
<dbReference type="InterPro" id="IPR020785">
    <property type="entry name" value="Ribosomal_uL11_CS"/>
</dbReference>
<dbReference type="InterPro" id="IPR020784">
    <property type="entry name" value="Ribosomal_uL11_N"/>
</dbReference>
<dbReference type="InterPro" id="IPR036796">
    <property type="entry name" value="Ribosomal_uL11_N_sf"/>
</dbReference>
<dbReference type="NCBIfam" id="TIGR01632">
    <property type="entry name" value="L11_bact"/>
    <property type="match status" value="1"/>
</dbReference>
<dbReference type="PANTHER" id="PTHR11661">
    <property type="entry name" value="60S RIBOSOMAL PROTEIN L12"/>
    <property type="match status" value="1"/>
</dbReference>
<dbReference type="PANTHER" id="PTHR11661:SF1">
    <property type="entry name" value="LARGE RIBOSOMAL SUBUNIT PROTEIN UL11M"/>
    <property type="match status" value="1"/>
</dbReference>
<dbReference type="Pfam" id="PF00298">
    <property type="entry name" value="Ribosomal_L11"/>
    <property type="match status" value="1"/>
</dbReference>
<dbReference type="Pfam" id="PF03946">
    <property type="entry name" value="Ribosomal_L11_N"/>
    <property type="match status" value="1"/>
</dbReference>
<dbReference type="SMART" id="SM00649">
    <property type="entry name" value="RL11"/>
    <property type="match status" value="1"/>
</dbReference>
<dbReference type="SUPFAM" id="SSF54747">
    <property type="entry name" value="Ribosomal L11/L12e N-terminal domain"/>
    <property type="match status" value="1"/>
</dbReference>
<dbReference type="SUPFAM" id="SSF46906">
    <property type="entry name" value="Ribosomal protein L11, C-terminal domain"/>
    <property type="match status" value="1"/>
</dbReference>
<dbReference type="PROSITE" id="PS00359">
    <property type="entry name" value="RIBOSOMAL_L11"/>
    <property type="match status" value="1"/>
</dbReference>
<sequence length="141" mass="14705">MAKKVVAVIKLAITAGKANPSPPIGPALGQHGVNIMAFCKEYNAKTADQAGTVVPVEISVYEDRSFTFVLKTPPAAVLIKKAAGVESGSSEPNRTKVGSITQAQLQEIAQTKMPDLNANNIEAAMKIVAGTARNMGITISD</sequence>
<feature type="chain" id="PRO_1000046288" description="Large ribosomal subunit protein uL11">
    <location>
        <begin position="1"/>
        <end position="141"/>
    </location>
</feature>
<gene>
    <name evidence="1" type="primary">rplK</name>
    <name evidence="1" type="synonym">rpl11</name>
    <name type="ordered locus">Tery_0265</name>
</gene>
<protein>
    <recommendedName>
        <fullName evidence="1">Large ribosomal subunit protein uL11</fullName>
    </recommendedName>
    <alternativeName>
        <fullName evidence="2">50S ribosomal protein L11</fullName>
    </alternativeName>
</protein>
<name>RL11_TRIEI</name>
<keyword id="KW-0488">Methylation</keyword>
<keyword id="KW-0687">Ribonucleoprotein</keyword>
<keyword id="KW-0689">Ribosomal protein</keyword>
<keyword id="KW-0694">RNA-binding</keyword>
<keyword id="KW-0699">rRNA-binding</keyword>
<comment type="function">
    <text evidence="1">Forms part of the ribosomal stalk which helps the ribosome interact with GTP-bound translation factors.</text>
</comment>
<comment type="subunit">
    <text evidence="1">Part of the ribosomal stalk of the 50S ribosomal subunit. Interacts with L10 and the large rRNA to form the base of the stalk. L10 forms an elongated spine to which L12 dimers bind in a sequential fashion forming a multimeric L10(L12)X complex.</text>
</comment>
<comment type="PTM">
    <text evidence="1">One or more lysine residues are methylated.</text>
</comment>
<comment type="similarity">
    <text evidence="1">Belongs to the universal ribosomal protein uL11 family.</text>
</comment>
<accession>Q119S6</accession>
<proteinExistence type="inferred from homology"/>
<organism>
    <name type="scientific">Trichodesmium erythraeum (strain IMS101)</name>
    <dbReference type="NCBI Taxonomy" id="203124"/>
    <lineage>
        <taxon>Bacteria</taxon>
        <taxon>Bacillati</taxon>
        <taxon>Cyanobacteriota</taxon>
        <taxon>Cyanophyceae</taxon>
        <taxon>Oscillatoriophycideae</taxon>
        <taxon>Oscillatoriales</taxon>
        <taxon>Microcoleaceae</taxon>
        <taxon>Trichodesmium</taxon>
    </lineage>
</organism>
<evidence type="ECO:0000255" key="1">
    <source>
        <dbReference type="HAMAP-Rule" id="MF_00736"/>
    </source>
</evidence>
<evidence type="ECO:0000305" key="2"/>